<reference key="1">
    <citation type="journal article" date="2000" name="Nature">
        <title>Sequence and analysis of chromosome 1 of the plant Arabidopsis thaliana.</title>
        <authorList>
            <person name="Theologis A."/>
            <person name="Ecker J.R."/>
            <person name="Palm C.J."/>
            <person name="Federspiel N.A."/>
            <person name="Kaul S."/>
            <person name="White O."/>
            <person name="Alonso J."/>
            <person name="Altafi H."/>
            <person name="Araujo R."/>
            <person name="Bowman C.L."/>
            <person name="Brooks S.Y."/>
            <person name="Buehler E."/>
            <person name="Chan A."/>
            <person name="Chao Q."/>
            <person name="Chen H."/>
            <person name="Cheuk R.F."/>
            <person name="Chin C.W."/>
            <person name="Chung M.K."/>
            <person name="Conn L."/>
            <person name="Conway A.B."/>
            <person name="Conway A.R."/>
            <person name="Creasy T.H."/>
            <person name="Dewar K."/>
            <person name="Dunn P."/>
            <person name="Etgu P."/>
            <person name="Feldblyum T.V."/>
            <person name="Feng J.-D."/>
            <person name="Fong B."/>
            <person name="Fujii C.Y."/>
            <person name="Gill J.E."/>
            <person name="Goldsmith A.D."/>
            <person name="Haas B."/>
            <person name="Hansen N.F."/>
            <person name="Hughes B."/>
            <person name="Huizar L."/>
            <person name="Hunter J.L."/>
            <person name="Jenkins J."/>
            <person name="Johnson-Hopson C."/>
            <person name="Khan S."/>
            <person name="Khaykin E."/>
            <person name="Kim C.J."/>
            <person name="Koo H.L."/>
            <person name="Kremenetskaia I."/>
            <person name="Kurtz D.B."/>
            <person name="Kwan A."/>
            <person name="Lam B."/>
            <person name="Langin-Hooper S."/>
            <person name="Lee A."/>
            <person name="Lee J.M."/>
            <person name="Lenz C.A."/>
            <person name="Li J.H."/>
            <person name="Li Y.-P."/>
            <person name="Lin X."/>
            <person name="Liu S.X."/>
            <person name="Liu Z.A."/>
            <person name="Luros J.S."/>
            <person name="Maiti R."/>
            <person name="Marziali A."/>
            <person name="Militscher J."/>
            <person name="Miranda M."/>
            <person name="Nguyen M."/>
            <person name="Nierman W.C."/>
            <person name="Osborne B.I."/>
            <person name="Pai G."/>
            <person name="Peterson J."/>
            <person name="Pham P.K."/>
            <person name="Rizzo M."/>
            <person name="Rooney T."/>
            <person name="Rowley D."/>
            <person name="Sakano H."/>
            <person name="Salzberg S.L."/>
            <person name="Schwartz J.R."/>
            <person name="Shinn P."/>
            <person name="Southwick A.M."/>
            <person name="Sun H."/>
            <person name="Tallon L.J."/>
            <person name="Tambunga G."/>
            <person name="Toriumi M.J."/>
            <person name="Town C.D."/>
            <person name="Utterback T."/>
            <person name="Van Aken S."/>
            <person name="Vaysberg M."/>
            <person name="Vysotskaia V.S."/>
            <person name="Walker M."/>
            <person name="Wu D."/>
            <person name="Yu G."/>
            <person name="Fraser C.M."/>
            <person name="Venter J.C."/>
            <person name="Davis R.W."/>
        </authorList>
    </citation>
    <scope>NUCLEOTIDE SEQUENCE [LARGE SCALE GENOMIC DNA]</scope>
    <source>
        <strain>cv. Columbia</strain>
    </source>
</reference>
<reference key="2">
    <citation type="journal article" date="2017" name="Plant J.">
        <title>Araport11: a complete reannotation of the Arabidopsis thaliana reference genome.</title>
        <authorList>
            <person name="Cheng C.Y."/>
            <person name="Krishnakumar V."/>
            <person name="Chan A.P."/>
            <person name="Thibaud-Nissen F."/>
            <person name="Schobel S."/>
            <person name="Town C.D."/>
        </authorList>
    </citation>
    <scope>GENOME REANNOTATION</scope>
    <source>
        <strain>cv. Columbia</strain>
    </source>
</reference>
<reference key="3">
    <citation type="journal article" date="2003" name="Science">
        <title>Empirical analysis of transcriptional activity in the Arabidopsis genome.</title>
        <authorList>
            <person name="Yamada K."/>
            <person name="Lim J."/>
            <person name="Dale J.M."/>
            <person name="Chen H."/>
            <person name="Shinn P."/>
            <person name="Palm C.J."/>
            <person name="Southwick A.M."/>
            <person name="Wu H.C."/>
            <person name="Kim C.J."/>
            <person name="Nguyen M."/>
            <person name="Pham P.K."/>
            <person name="Cheuk R.F."/>
            <person name="Karlin-Newmann G."/>
            <person name="Liu S.X."/>
            <person name="Lam B."/>
            <person name="Sakano H."/>
            <person name="Wu T."/>
            <person name="Yu G."/>
            <person name="Miranda M."/>
            <person name="Quach H.L."/>
            <person name="Tripp M."/>
            <person name="Chang C.H."/>
            <person name="Lee J.M."/>
            <person name="Toriumi M.J."/>
            <person name="Chan M.M."/>
            <person name="Tang C.C."/>
            <person name="Onodera C.S."/>
            <person name="Deng J.M."/>
            <person name="Akiyama K."/>
            <person name="Ansari Y."/>
            <person name="Arakawa T."/>
            <person name="Banh J."/>
            <person name="Banno F."/>
            <person name="Bowser L."/>
            <person name="Brooks S.Y."/>
            <person name="Carninci P."/>
            <person name="Chao Q."/>
            <person name="Choy N."/>
            <person name="Enju A."/>
            <person name="Goldsmith A.D."/>
            <person name="Gurjal M."/>
            <person name="Hansen N.F."/>
            <person name="Hayashizaki Y."/>
            <person name="Johnson-Hopson C."/>
            <person name="Hsuan V.W."/>
            <person name="Iida K."/>
            <person name="Karnes M."/>
            <person name="Khan S."/>
            <person name="Koesema E."/>
            <person name="Ishida J."/>
            <person name="Jiang P.X."/>
            <person name="Jones T."/>
            <person name="Kawai J."/>
            <person name="Kamiya A."/>
            <person name="Meyers C."/>
            <person name="Nakajima M."/>
            <person name="Narusaka M."/>
            <person name="Seki M."/>
            <person name="Sakurai T."/>
            <person name="Satou M."/>
            <person name="Tamse R."/>
            <person name="Vaysberg M."/>
            <person name="Wallender E.K."/>
            <person name="Wong C."/>
            <person name="Yamamura Y."/>
            <person name="Yuan S."/>
            <person name="Shinozaki K."/>
            <person name="Davis R.W."/>
            <person name="Theologis A."/>
            <person name="Ecker J.R."/>
        </authorList>
    </citation>
    <scope>NUCLEOTIDE SEQUENCE [LARGE SCALE MRNA]</scope>
    <source>
        <strain>cv. Columbia</strain>
    </source>
</reference>
<reference key="4">
    <citation type="journal article" date="2008" name="BMC Genomics">
        <title>Genome-wide and expression analysis of protein phosphatase 2C in rice and Arabidopsis.</title>
        <authorList>
            <person name="Xue T."/>
            <person name="Wang D."/>
            <person name="Zhang S."/>
            <person name="Ehlting J."/>
            <person name="Ni F."/>
            <person name="Jacab S."/>
            <person name="Zheng C."/>
            <person name="Zhong Y."/>
        </authorList>
    </citation>
    <scope>GENE FAMILY</scope>
    <scope>NOMENCLATURE</scope>
</reference>
<dbReference type="EC" id="3.1.3.16"/>
<dbReference type="EMBL" id="AC015986">
    <property type="protein sequence ID" value="AAF26041.1"/>
    <property type="molecule type" value="Genomic_DNA"/>
</dbReference>
<dbReference type="EMBL" id="CP002684">
    <property type="protein sequence ID" value="AEE34790.1"/>
    <property type="molecule type" value="Genomic_DNA"/>
</dbReference>
<dbReference type="EMBL" id="CP002684">
    <property type="protein sequence ID" value="AEE34791.1"/>
    <property type="molecule type" value="Genomic_DNA"/>
</dbReference>
<dbReference type="EMBL" id="CP002684">
    <property type="protein sequence ID" value="ANM57864.1"/>
    <property type="molecule type" value="Genomic_DNA"/>
</dbReference>
<dbReference type="EMBL" id="CP002684">
    <property type="protein sequence ID" value="ANM57865.1"/>
    <property type="molecule type" value="Genomic_DNA"/>
</dbReference>
<dbReference type="EMBL" id="AY050881">
    <property type="protein sequence ID" value="AAK92818.1"/>
    <property type="molecule type" value="mRNA"/>
</dbReference>
<dbReference type="EMBL" id="AY091295">
    <property type="protein sequence ID" value="AAM14234.1"/>
    <property type="molecule type" value="mRNA"/>
</dbReference>
<dbReference type="PIR" id="A96708">
    <property type="entry name" value="A96708"/>
</dbReference>
<dbReference type="RefSeq" id="NP_001031252.1">
    <property type="nucleotide sequence ID" value="NM_001036175.2"/>
</dbReference>
<dbReference type="RefSeq" id="NP_001320343.1">
    <property type="nucleotide sequence ID" value="NM_001334363.1"/>
</dbReference>
<dbReference type="RefSeq" id="NP_001320344.1">
    <property type="nucleotide sequence ID" value="NM_001334364.1"/>
</dbReference>
<dbReference type="RefSeq" id="NP_177008.1">
    <property type="nucleotide sequence ID" value="NM_105512.3"/>
</dbReference>
<dbReference type="SMR" id="Q9M9C6"/>
<dbReference type="BioGRID" id="28391">
    <property type="interactions" value="1"/>
</dbReference>
<dbReference type="FunCoup" id="Q9M9C6">
    <property type="interactions" value="410"/>
</dbReference>
<dbReference type="STRING" id="3702.Q9M9C6"/>
<dbReference type="PaxDb" id="3702-AT1G68410.2"/>
<dbReference type="ProteomicsDB" id="248871"/>
<dbReference type="EnsemblPlants" id="AT1G68410.1">
    <property type="protein sequence ID" value="AT1G68410.1"/>
    <property type="gene ID" value="AT1G68410"/>
</dbReference>
<dbReference type="EnsemblPlants" id="AT1G68410.2">
    <property type="protein sequence ID" value="AT1G68410.2"/>
    <property type="gene ID" value="AT1G68410"/>
</dbReference>
<dbReference type="EnsemblPlants" id="AT1G68410.3">
    <property type="protein sequence ID" value="AT1G68410.3"/>
    <property type="gene ID" value="AT1G68410"/>
</dbReference>
<dbReference type="EnsemblPlants" id="AT1G68410.4">
    <property type="protein sequence ID" value="AT1G68410.4"/>
    <property type="gene ID" value="AT1G68410"/>
</dbReference>
<dbReference type="GeneID" id="843170"/>
<dbReference type="Gramene" id="AT1G68410.1">
    <property type="protein sequence ID" value="AT1G68410.1"/>
    <property type="gene ID" value="AT1G68410"/>
</dbReference>
<dbReference type="Gramene" id="AT1G68410.2">
    <property type="protein sequence ID" value="AT1G68410.2"/>
    <property type="gene ID" value="AT1G68410"/>
</dbReference>
<dbReference type="Gramene" id="AT1G68410.3">
    <property type="protein sequence ID" value="AT1G68410.3"/>
    <property type="gene ID" value="AT1G68410"/>
</dbReference>
<dbReference type="Gramene" id="AT1G68410.4">
    <property type="protein sequence ID" value="AT1G68410.4"/>
    <property type="gene ID" value="AT1G68410"/>
</dbReference>
<dbReference type="KEGG" id="ath:AT1G68410"/>
<dbReference type="Araport" id="AT1G68410"/>
<dbReference type="TAIR" id="AT1G68410"/>
<dbReference type="eggNOG" id="KOG0698">
    <property type="taxonomic scope" value="Eukaryota"/>
</dbReference>
<dbReference type="HOGENOM" id="CLU_013173_3_1_1"/>
<dbReference type="InParanoid" id="Q9M9C6"/>
<dbReference type="OMA" id="TVRYGHA"/>
<dbReference type="OrthoDB" id="10264738at2759"/>
<dbReference type="PhylomeDB" id="Q9M9C6"/>
<dbReference type="PRO" id="PR:Q9M9C6"/>
<dbReference type="Proteomes" id="UP000006548">
    <property type="component" value="Chromosome 1"/>
</dbReference>
<dbReference type="ExpressionAtlas" id="Q9M9C6">
    <property type="expression patterns" value="baseline and differential"/>
</dbReference>
<dbReference type="GO" id="GO:0046872">
    <property type="term" value="F:metal ion binding"/>
    <property type="evidence" value="ECO:0007669"/>
    <property type="project" value="UniProtKB-KW"/>
</dbReference>
<dbReference type="GO" id="GO:0004722">
    <property type="term" value="F:protein serine/threonine phosphatase activity"/>
    <property type="evidence" value="ECO:0007669"/>
    <property type="project" value="UniProtKB-EC"/>
</dbReference>
<dbReference type="CDD" id="cd00143">
    <property type="entry name" value="PP2Cc"/>
    <property type="match status" value="1"/>
</dbReference>
<dbReference type="FunFam" id="3.60.40.10:FF:000013">
    <property type="entry name" value="probable protein phosphatase 2C 5"/>
    <property type="match status" value="1"/>
</dbReference>
<dbReference type="Gene3D" id="3.60.40.10">
    <property type="entry name" value="PPM-type phosphatase domain"/>
    <property type="match status" value="1"/>
</dbReference>
<dbReference type="InterPro" id="IPR015655">
    <property type="entry name" value="PP2C"/>
</dbReference>
<dbReference type="InterPro" id="IPR036457">
    <property type="entry name" value="PPM-type-like_dom_sf"/>
</dbReference>
<dbReference type="InterPro" id="IPR001932">
    <property type="entry name" value="PPM-type_phosphatase-like_dom"/>
</dbReference>
<dbReference type="PANTHER" id="PTHR47992">
    <property type="entry name" value="PROTEIN PHOSPHATASE"/>
    <property type="match status" value="1"/>
</dbReference>
<dbReference type="Pfam" id="PF00481">
    <property type="entry name" value="PP2C"/>
    <property type="match status" value="1"/>
</dbReference>
<dbReference type="SMART" id="SM00331">
    <property type="entry name" value="PP2C_SIG"/>
    <property type="match status" value="1"/>
</dbReference>
<dbReference type="SMART" id="SM00332">
    <property type="entry name" value="PP2Cc"/>
    <property type="match status" value="1"/>
</dbReference>
<dbReference type="SUPFAM" id="SSF81606">
    <property type="entry name" value="PP2C-like"/>
    <property type="match status" value="1"/>
</dbReference>
<dbReference type="PROSITE" id="PS51746">
    <property type="entry name" value="PPM_2"/>
    <property type="match status" value="1"/>
</dbReference>
<feature type="chain" id="PRO_0000367946" description="Probable protein phosphatase 2C 15">
    <location>
        <begin position="1"/>
        <end position="436"/>
    </location>
</feature>
<feature type="domain" description="PPM-type phosphatase" evidence="2">
    <location>
        <begin position="30"/>
        <end position="302"/>
    </location>
</feature>
<feature type="binding site" evidence="1">
    <location>
        <position position="78"/>
    </location>
    <ligand>
        <name>Mn(2+)</name>
        <dbReference type="ChEBI" id="CHEBI:29035"/>
        <label>1</label>
    </ligand>
</feature>
<feature type="binding site" evidence="1">
    <location>
        <position position="78"/>
    </location>
    <ligand>
        <name>Mn(2+)</name>
        <dbReference type="ChEBI" id="CHEBI:29035"/>
        <label>2</label>
    </ligand>
</feature>
<feature type="binding site" evidence="1">
    <location>
        <position position="79"/>
    </location>
    <ligand>
        <name>Mn(2+)</name>
        <dbReference type="ChEBI" id="CHEBI:29035"/>
        <label>1</label>
    </ligand>
</feature>
<feature type="binding site" evidence="1">
    <location>
        <position position="254"/>
    </location>
    <ligand>
        <name>Mn(2+)</name>
        <dbReference type="ChEBI" id="CHEBI:29035"/>
        <label>2</label>
    </ligand>
</feature>
<feature type="binding site" evidence="1">
    <location>
        <position position="293"/>
    </location>
    <ligand>
        <name>Mn(2+)</name>
        <dbReference type="ChEBI" id="CHEBI:29035"/>
        <label>2</label>
    </ligand>
</feature>
<sequence length="436" mass="47041">MASREGKRRNHNHDDEKLVPLAALISRETKAAKMEKPIVRFGQAAQSRKGEDYVLIKTDSLRVPSNSSTAFSVFAVFDGHNGKAAAVYTRENLLNHVISALPSGLSRDEWLHALPRALVSGFVKTDKEFQSRGETSGTTATFVIVDGWTVTVACVGDSRCILDTKGGSVSNLTVDHRLEDNTEERERVTASGGEVGRLSIVGGVEIGPLRCWPGGLCLSRSIGDMDVGEFIVPVPFVKQVKLSNLGGRLIIASDGIWDALSSEVAAKTCRGLSAELAARQVVKEALRRRGLKDDTTCIVVDIIPPENFQEPPPSPPKKHNNFFKSLLFRKKSNSSNKLSKKLSTVGIVEELFEEGSAMLAERLGSGDCSKESTTGGGIFTCAICQLDLAPSEGISVHAGSIFSTSLKPWQGPFLCTDCRDKKDAMEGKRPSGVKVI</sequence>
<protein>
    <recommendedName>
        <fullName>Probable protein phosphatase 2C 15</fullName>
        <shortName>AtPP2C15</shortName>
        <ecNumber>3.1.3.16</ecNumber>
    </recommendedName>
</protein>
<gene>
    <name type="ordered locus">At1g68410</name>
    <name type="ORF">T2E12.9</name>
</gene>
<organism>
    <name type="scientific">Arabidopsis thaliana</name>
    <name type="common">Mouse-ear cress</name>
    <dbReference type="NCBI Taxonomy" id="3702"/>
    <lineage>
        <taxon>Eukaryota</taxon>
        <taxon>Viridiplantae</taxon>
        <taxon>Streptophyta</taxon>
        <taxon>Embryophyta</taxon>
        <taxon>Tracheophyta</taxon>
        <taxon>Spermatophyta</taxon>
        <taxon>Magnoliopsida</taxon>
        <taxon>eudicotyledons</taxon>
        <taxon>Gunneridae</taxon>
        <taxon>Pentapetalae</taxon>
        <taxon>rosids</taxon>
        <taxon>malvids</taxon>
        <taxon>Brassicales</taxon>
        <taxon>Brassicaceae</taxon>
        <taxon>Camelineae</taxon>
        <taxon>Arabidopsis</taxon>
    </lineage>
</organism>
<keyword id="KW-0378">Hydrolase</keyword>
<keyword id="KW-0460">Magnesium</keyword>
<keyword id="KW-0464">Manganese</keyword>
<keyword id="KW-0479">Metal-binding</keyword>
<keyword id="KW-0904">Protein phosphatase</keyword>
<keyword id="KW-1185">Reference proteome</keyword>
<name>P2C15_ARATH</name>
<evidence type="ECO:0000250" key="1"/>
<evidence type="ECO:0000255" key="2">
    <source>
        <dbReference type="PROSITE-ProRule" id="PRU01082"/>
    </source>
</evidence>
<evidence type="ECO:0000305" key="3"/>
<comment type="catalytic activity">
    <reaction>
        <text>O-phospho-L-seryl-[protein] + H2O = L-seryl-[protein] + phosphate</text>
        <dbReference type="Rhea" id="RHEA:20629"/>
        <dbReference type="Rhea" id="RHEA-COMP:9863"/>
        <dbReference type="Rhea" id="RHEA-COMP:11604"/>
        <dbReference type="ChEBI" id="CHEBI:15377"/>
        <dbReference type="ChEBI" id="CHEBI:29999"/>
        <dbReference type="ChEBI" id="CHEBI:43474"/>
        <dbReference type="ChEBI" id="CHEBI:83421"/>
        <dbReference type="EC" id="3.1.3.16"/>
    </reaction>
</comment>
<comment type="catalytic activity">
    <reaction>
        <text>O-phospho-L-threonyl-[protein] + H2O = L-threonyl-[protein] + phosphate</text>
        <dbReference type="Rhea" id="RHEA:47004"/>
        <dbReference type="Rhea" id="RHEA-COMP:11060"/>
        <dbReference type="Rhea" id="RHEA-COMP:11605"/>
        <dbReference type="ChEBI" id="CHEBI:15377"/>
        <dbReference type="ChEBI" id="CHEBI:30013"/>
        <dbReference type="ChEBI" id="CHEBI:43474"/>
        <dbReference type="ChEBI" id="CHEBI:61977"/>
        <dbReference type="EC" id="3.1.3.16"/>
    </reaction>
</comment>
<comment type="cofactor">
    <cofactor evidence="1">
        <name>Mg(2+)</name>
        <dbReference type="ChEBI" id="CHEBI:18420"/>
    </cofactor>
    <cofactor evidence="1">
        <name>Mn(2+)</name>
        <dbReference type="ChEBI" id="CHEBI:29035"/>
    </cofactor>
    <text evidence="1">Binds 2 magnesium or manganese ions per subunit.</text>
</comment>
<comment type="similarity">
    <text evidence="3">Belongs to the PP2C family.</text>
</comment>
<proteinExistence type="evidence at transcript level"/>
<accession>Q9M9C6</accession>